<organism>
    <name type="scientific">Escherichia coli (strain K12)</name>
    <dbReference type="NCBI Taxonomy" id="83333"/>
    <lineage>
        <taxon>Bacteria</taxon>
        <taxon>Pseudomonadati</taxon>
        <taxon>Pseudomonadota</taxon>
        <taxon>Gammaproteobacteria</taxon>
        <taxon>Enterobacterales</taxon>
        <taxon>Enterobacteriaceae</taxon>
        <taxon>Escherichia</taxon>
    </lineage>
</organism>
<dbReference type="EMBL" id="U00096">
    <property type="protein sequence ID" value="AAC75020.2"/>
    <property type="molecule type" value="Genomic_DNA"/>
</dbReference>
<dbReference type="EMBL" id="AP009048">
    <property type="protein sequence ID" value="BAE76554.1"/>
    <property type="molecule type" value="Genomic_DNA"/>
</dbReference>
<dbReference type="RefSeq" id="NP_416463.4">
    <property type="nucleotide sequence ID" value="NC_000913.3"/>
</dbReference>
<dbReference type="RefSeq" id="WP_000844800.1">
    <property type="nucleotide sequence ID" value="NZ_STEB01000050.1"/>
</dbReference>
<dbReference type="SMR" id="P64519"/>
<dbReference type="BioGRID" id="4261049">
    <property type="interactions" value="13"/>
</dbReference>
<dbReference type="BioGRID" id="850823">
    <property type="interactions" value="2"/>
</dbReference>
<dbReference type="DIP" id="DIP-48227N"/>
<dbReference type="FunCoup" id="P64519">
    <property type="interactions" value="18"/>
</dbReference>
<dbReference type="IntAct" id="P64519">
    <property type="interactions" value="2"/>
</dbReference>
<dbReference type="STRING" id="511145.b1953"/>
<dbReference type="jPOST" id="P64519"/>
<dbReference type="PaxDb" id="511145-b1953"/>
<dbReference type="EnsemblBacteria" id="AAC75020">
    <property type="protein sequence ID" value="AAC75020"/>
    <property type="gene ID" value="b1953"/>
</dbReference>
<dbReference type="GeneID" id="93775232"/>
<dbReference type="GeneID" id="946469"/>
<dbReference type="KEGG" id="ecj:JW5317"/>
<dbReference type="KEGG" id="eco:b1953"/>
<dbReference type="KEGG" id="ecoc:C3026_11055"/>
<dbReference type="PATRIC" id="fig|511145.12.peg.2032"/>
<dbReference type="EchoBASE" id="EB4130"/>
<dbReference type="eggNOG" id="ENOG5032W92">
    <property type="taxonomic scope" value="Bacteria"/>
</dbReference>
<dbReference type="HOGENOM" id="CLU_183590_0_0_6"/>
<dbReference type="InParanoid" id="P64519"/>
<dbReference type="OMA" id="RDYHTYR"/>
<dbReference type="OrthoDB" id="6433496at2"/>
<dbReference type="PhylomeDB" id="P64519"/>
<dbReference type="BioCyc" id="EcoCyc:G7046-MONOMER"/>
<dbReference type="PRO" id="PR:P64519"/>
<dbReference type="Proteomes" id="UP000000625">
    <property type="component" value="Chromosome"/>
</dbReference>
<dbReference type="GO" id="GO:0071468">
    <property type="term" value="P:cellular response to acidic pH"/>
    <property type="evidence" value="ECO:0000315"/>
    <property type="project" value="EcoCyc"/>
</dbReference>
<dbReference type="GO" id="GO:0070301">
    <property type="term" value="P:cellular response to hydrogen peroxide"/>
    <property type="evidence" value="ECO:0000315"/>
    <property type="project" value="EcoCyc"/>
</dbReference>
<dbReference type="GO" id="GO:0044011">
    <property type="term" value="P:single-species biofilm formation on inanimate substrate"/>
    <property type="evidence" value="ECO:0000315"/>
    <property type="project" value="EcoCyc"/>
</dbReference>
<dbReference type="InterPro" id="IPR019669">
    <property type="entry name" value="Uncharacterised_YodD"/>
</dbReference>
<dbReference type="Pfam" id="PF10733">
    <property type="entry name" value="DUF2525"/>
    <property type="match status" value="1"/>
</dbReference>
<accession>P64519</accession>
<accession>P76328</accession>
<accession>Q2MB02</accession>
<protein>
    <recommendedName>
        <fullName>Uncharacterized protein YodD</fullName>
    </recommendedName>
</protein>
<proteinExistence type="predicted"/>
<gene>
    <name type="primary">yodD</name>
    <name type="ordered locus">b1953</name>
    <name type="ordered locus">JW5317</name>
</gene>
<name>YODD_ECOLI</name>
<feature type="chain" id="PRO_0000169104" description="Uncharacterized protein YodD">
    <location>
        <begin position="1"/>
        <end position="75"/>
    </location>
</feature>
<keyword id="KW-1185">Reference proteome</keyword>
<sequence>MKTAKEYSDTAKREVSVDVDALLAAINEISESEVHRSQNDSEHVSVDGREYHTWRELADAFELDIHDFSVSEVNR</sequence>
<reference key="1">
    <citation type="journal article" date="1997" name="Science">
        <title>The complete genome sequence of Escherichia coli K-12.</title>
        <authorList>
            <person name="Blattner F.R."/>
            <person name="Plunkett G. III"/>
            <person name="Bloch C.A."/>
            <person name="Perna N.T."/>
            <person name="Burland V."/>
            <person name="Riley M."/>
            <person name="Collado-Vides J."/>
            <person name="Glasner J.D."/>
            <person name="Rode C.K."/>
            <person name="Mayhew G.F."/>
            <person name="Gregor J."/>
            <person name="Davis N.W."/>
            <person name="Kirkpatrick H.A."/>
            <person name="Goeden M.A."/>
            <person name="Rose D.J."/>
            <person name="Mau B."/>
            <person name="Shao Y."/>
        </authorList>
    </citation>
    <scope>NUCLEOTIDE SEQUENCE [LARGE SCALE GENOMIC DNA]</scope>
    <source>
        <strain>K12 / MG1655 / ATCC 47076</strain>
    </source>
</reference>
<reference key="2">
    <citation type="journal article" date="2006" name="Mol. Syst. Biol.">
        <title>Highly accurate genome sequences of Escherichia coli K-12 strains MG1655 and W3110.</title>
        <authorList>
            <person name="Hayashi K."/>
            <person name="Morooka N."/>
            <person name="Yamamoto Y."/>
            <person name="Fujita K."/>
            <person name="Isono K."/>
            <person name="Choi S."/>
            <person name="Ohtsubo E."/>
            <person name="Baba T."/>
            <person name="Wanner B.L."/>
            <person name="Mori H."/>
            <person name="Horiuchi T."/>
        </authorList>
    </citation>
    <scope>NUCLEOTIDE SEQUENCE [LARGE SCALE GENOMIC DNA]</scope>
    <source>
        <strain>K12 / W3110 / ATCC 27325 / DSM 5911</strain>
    </source>
</reference>